<feature type="chain" id="PRO_0000421313" description="WAT1-related protein At1g21890">
    <location>
        <begin position="1"/>
        <end position="389"/>
    </location>
</feature>
<feature type="transmembrane region" description="Helical" evidence="2">
    <location>
        <begin position="13"/>
        <end position="33"/>
    </location>
</feature>
<feature type="transmembrane region" description="Helical" evidence="2">
    <location>
        <begin position="40"/>
        <end position="60"/>
    </location>
</feature>
<feature type="transmembrane region" description="Helical" evidence="2">
    <location>
        <begin position="73"/>
        <end position="93"/>
    </location>
</feature>
<feature type="transmembrane region" description="Helical" evidence="2">
    <location>
        <begin position="102"/>
        <end position="122"/>
    </location>
</feature>
<feature type="transmembrane region" description="Helical" evidence="2">
    <location>
        <begin position="142"/>
        <end position="162"/>
    </location>
</feature>
<feature type="transmembrane region" description="Helical" evidence="2">
    <location>
        <begin position="191"/>
        <end position="211"/>
    </location>
</feature>
<feature type="transmembrane region" description="Helical" evidence="2">
    <location>
        <begin position="225"/>
        <end position="245"/>
    </location>
</feature>
<feature type="transmembrane region" description="Helical" evidence="2">
    <location>
        <begin position="260"/>
        <end position="280"/>
    </location>
</feature>
<feature type="transmembrane region" description="Helical" evidence="2">
    <location>
        <begin position="287"/>
        <end position="307"/>
    </location>
</feature>
<feature type="transmembrane region" description="Helical" evidence="2">
    <location>
        <begin position="312"/>
        <end position="332"/>
    </location>
</feature>
<feature type="domain" description="EamA 1">
    <location>
        <begin position="23"/>
        <end position="150"/>
    </location>
</feature>
<feature type="domain" description="EamA 2">
    <location>
        <begin position="205"/>
        <end position="331"/>
    </location>
</feature>
<feature type="region of interest" description="Disordered" evidence="3">
    <location>
        <begin position="339"/>
        <end position="361"/>
    </location>
</feature>
<feature type="sequence conflict" description="In Ref. 3; AAL38712/AAM91775." evidence="4" ref="3">
    <original>I</original>
    <variation>N</variation>
    <location>
        <position position="121"/>
    </location>
</feature>
<keyword id="KW-0472">Membrane</keyword>
<keyword id="KW-1185">Reference proteome</keyword>
<keyword id="KW-0677">Repeat</keyword>
<keyword id="KW-0812">Transmembrane</keyword>
<keyword id="KW-1133">Transmembrane helix</keyword>
<gene>
    <name type="ordered locus">At1g21890</name>
    <name type="ORF">T26F17.11</name>
</gene>
<evidence type="ECO:0000250" key="1"/>
<evidence type="ECO:0000255" key="2"/>
<evidence type="ECO:0000256" key="3">
    <source>
        <dbReference type="SAM" id="MobiDB-lite"/>
    </source>
</evidence>
<evidence type="ECO:0000305" key="4"/>
<sequence>MGRGLMNSLKPYLAMISMQFGYAGMYIITMVSLKHGMNHYVLAVYRHAIATAVIAPFALFHERKIRPKMTFRIFLQIALLGFIEPVLDQNLYYVGMTYTSATFASATANVLPAITFVLAIIFRLESVNFKKVRSIAKVVGTVITVSGALLMTLYKGPIVDFIRFGGGGGGGSDGAGGSHGGAGAAAMDKHWIPGTLMLLGRTFGWAGFFILQSFTLKQYPAELSLTTLICLMGTLEGTAVSLVTVRDLSAWKIGFDSNLFAAAYSGVICSGVAYYVQGVVMRERGPVFVATFNPLCVVITAALGVVVLSESIHLGSVIGTLFIIVGLYTVVWGKGKDKRMTDDDEDCKGLPIKSPVKPVDTGKGLAAELEMKSKEGQEAKATTTTQVEI</sequence>
<protein>
    <recommendedName>
        <fullName>WAT1-related protein At1g21890</fullName>
    </recommendedName>
</protein>
<reference key="1">
    <citation type="journal article" date="2000" name="Nature">
        <title>Sequence and analysis of chromosome 1 of the plant Arabidopsis thaliana.</title>
        <authorList>
            <person name="Theologis A."/>
            <person name="Ecker J.R."/>
            <person name="Palm C.J."/>
            <person name="Federspiel N.A."/>
            <person name="Kaul S."/>
            <person name="White O."/>
            <person name="Alonso J."/>
            <person name="Altafi H."/>
            <person name="Araujo R."/>
            <person name="Bowman C.L."/>
            <person name="Brooks S.Y."/>
            <person name="Buehler E."/>
            <person name="Chan A."/>
            <person name="Chao Q."/>
            <person name="Chen H."/>
            <person name="Cheuk R.F."/>
            <person name="Chin C.W."/>
            <person name="Chung M.K."/>
            <person name="Conn L."/>
            <person name="Conway A.B."/>
            <person name="Conway A.R."/>
            <person name="Creasy T.H."/>
            <person name="Dewar K."/>
            <person name="Dunn P."/>
            <person name="Etgu P."/>
            <person name="Feldblyum T.V."/>
            <person name="Feng J.-D."/>
            <person name="Fong B."/>
            <person name="Fujii C.Y."/>
            <person name="Gill J.E."/>
            <person name="Goldsmith A.D."/>
            <person name="Haas B."/>
            <person name="Hansen N.F."/>
            <person name="Hughes B."/>
            <person name="Huizar L."/>
            <person name="Hunter J.L."/>
            <person name="Jenkins J."/>
            <person name="Johnson-Hopson C."/>
            <person name="Khan S."/>
            <person name="Khaykin E."/>
            <person name="Kim C.J."/>
            <person name="Koo H.L."/>
            <person name="Kremenetskaia I."/>
            <person name="Kurtz D.B."/>
            <person name="Kwan A."/>
            <person name="Lam B."/>
            <person name="Langin-Hooper S."/>
            <person name="Lee A."/>
            <person name="Lee J.M."/>
            <person name="Lenz C.A."/>
            <person name="Li J.H."/>
            <person name="Li Y.-P."/>
            <person name="Lin X."/>
            <person name="Liu S.X."/>
            <person name="Liu Z.A."/>
            <person name="Luros J.S."/>
            <person name="Maiti R."/>
            <person name="Marziali A."/>
            <person name="Militscher J."/>
            <person name="Miranda M."/>
            <person name="Nguyen M."/>
            <person name="Nierman W.C."/>
            <person name="Osborne B.I."/>
            <person name="Pai G."/>
            <person name="Peterson J."/>
            <person name="Pham P.K."/>
            <person name="Rizzo M."/>
            <person name="Rooney T."/>
            <person name="Rowley D."/>
            <person name="Sakano H."/>
            <person name="Salzberg S.L."/>
            <person name="Schwartz J.R."/>
            <person name="Shinn P."/>
            <person name="Southwick A.M."/>
            <person name="Sun H."/>
            <person name="Tallon L.J."/>
            <person name="Tambunga G."/>
            <person name="Toriumi M.J."/>
            <person name="Town C.D."/>
            <person name="Utterback T."/>
            <person name="Van Aken S."/>
            <person name="Vaysberg M."/>
            <person name="Vysotskaia V.S."/>
            <person name="Walker M."/>
            <person name="Wu D."/>
            <person name="Yu G."/>
            <person name="Fraser C.M."/>
            <person name="Venter J.C."/>
            <person name="Davis R.W."/>
        </authorList>
    </citation>
    <scope>NUCLEOTIDE SEQUENCE [LARGE SCALE GENOMIC DNA]</scope>
    <source>
        <strain>cv. Columbia</strain>
    </source>
</reference>
<reference key="2">
    <citation type="journal article" date="2017" name="Plant J.">
        <title>Araport11: a complete reannotation of the Arabidopsis thaliana reference genome.</title>
        <authorList>
            <person name="Cheng C.Y."/>
            <person name="Krishnakumar V."/>
            <person name="Chan A.P."/>
            <person name="Thibaud-Nissen F."/>
            <person name="Schobel S."/>
            <person name="Town C.D."/>
        </authorList>
    </citation>
    <scope>GENOME REANNOTATION</scope>
    <source>
        <strain>cv. Columbia</strain>
    </source>
</reference>
<reference key="3">
    <citation type="journal article" date="2003" name="Science">
        <title>Empirical analysis of transcriptional activity in the Arabidopsis genome.</title>
        <authorList>
            <person name="Yamada K."/>
            <person name="Lim J."/>
            <person name="Dale J.M."/>
            <person name="Chen H."/>
            <person name="Shinn P."/>
            <person name="Palm C.J."/>
            <person name="Southwick A.M."/>
            <person name="Wu H.C."/>
            <person name="Kim C.J."/>
            <person name="Nguyen M."/>
            <person name="Pham P.K."/>
            <person name="Cheuk R.F."/>
            <person name="Karlin-Newmann G."/>
            <person name="Liu S.X."/>
            <person name="Lam B."/>
            <person name="Sakano H."/>
            <person name="Wu T."/>
            <person name="Yu G."/>
            <person name="Miranda M."/>
            <person name="Quach H.L."/>
            <person name="Tripp M."/>
            <person name="Chang C.H."/>
            <person name="Lee J.M."/>
            <person name="Toriumi M.J."/>
            <person name="Chan M.M."/>
            <person name="Tang C.C."/>
            <person name="Onodera C.S."/>
            <person name="Deng J.M."/>
            <person name="Akiyama K."/>
            <person name="Ansari Y."/>
            <person name="Arakawa T."/>
            <person name="Banh J."/>
            <person name="Banno F."/>
            <person name="Bowser L."/>
            <person name="Brooks S.Y."/>
            <person name="Carninci P."/>
            <person name="Chao Q."/>
            <person name="Choy N."/>
            <person name="Enju A."/>
            <person name="Goldsmith A.D."/>
            <person name="Gurjal M."/>
            <person name="Hansen N.F."/>
            <person name="Hayashizaki Y."/>
            <person name="Johnson-Hopson C."/>
            <person name="Hsuan V.W."/>
            <person name="Iida K."/>
            <person name="Karnes M."/>
            <person name="Khan S."/>
            <person name="Koesema E."/>
            <person name="Ishida J."/>
            <person name="Jiang P.X."/>
            <person name="Jones T."/>
            <person name="Kawai J."/>
            <person name="Kamiya A."/>
            <person name="Meyers C."/>
            <person name="Nakajima M."/>
            <person name="Narusaka M."/>
            <person name="Seki M."/>
            <person name="Sakurai T."/>
            <person name="Satou M."/>
            <person name="Tamse R."/>
            <person name="Vaysberg M."/>
            <person name="Wallender E.K."/>
            <person name="Wong C."/>
            <person name="Yamamura Y."/>
            <person name="Yuan S."/>
            <person name="Shinozaki K."/>
            <person name="Davis R.W."/>
            <person name="Theologis A."/>
            <person name="Ecker J.R."/>
        </authorList>
    </citation>
    <scope>NUCLEOTIDE SEQUENCE [LARGE SCALE MRNA]</scope>
    <source>
        <strain>cv. Columbia</strain>
    </source>
</reference>
<comment type="subcellular location">
    <subcellularLocation>
        <location evidence="1">Membrane</location>
        <topology evidence="4">Multi-pass membrane protein</topology>
    </subcellularLocation>
</comment>
<comment type="similarity">
    <text evidence="4">Belongs to the drug/metabolite transporter (DMT) superfamily. Plant drug/metabolite exporter (P-DME) (TC 2.A.7.4) family.</text>
</comment>
<comment type="sequence caution" evidence="4">
    <conflict type="erroneous gene model prediction">
        <sequence resource="EMBL-CDS" id="AAF16542"/>
    </conflict>
</comment>
<dbReference type="EMBL" id="AC013482">
    <property type="protein sequence ID" value="AAF16542.1"/>
    <property type="status" value="ALT_SEQ"/>
    <property type="molecule type" value="Genomic_DNA"/>
</dbReference>
<dbReference type="EMBL" id="CP002684">
    <property type="protein sequence ID" value="AEE30169.1"/>
    <property type="molecule type" value="Genomic_DNA"/>
</dbReference>
<dbReference type="EMBL" id="AY065236">
    <property type="protein sequence ID" value="AAL38712.1"/>
    <property type="molecule type" value="mRNA"/>
</dbReference>
<dbReference type="EMBL" id="AY133841">
    <property type="protein sequence ID" value="AAM91775.1"/>
    <property type="molecule type" value="mRNA"/>
</dbReference>
<dbReference type="RefSeq" id="NP_173607.1">
    <property type="nucleotide sequence ID" value="NM_102037.3"/>
</dbReference>
<dbReference type="SMR" id="F4HZQ7"/>
<dbReference type="BioGRID" id="24030">
    <property type="interactions" value="8"/>
</dbReference>
<dbReference type="IntAct" id="F4HZQ7">
    <property type="interactions" value="8"/>
</dbReference>
<dbReference type="STRING" id="3702.F4HZQ7"/>
<dbReference type="PaxDb" id="3702-AT1G21890.1"/>
<dbReference type="EnsemblPlants" id="AT1G21890.1">
    <property type="protein sequence ID" value="AT1G21890.1"/>
    <property type="gene ID" value="AT1G21890"/>
</dbReference>
<dbReference type="GeneID" id="838791"/>
<dbReference type="Gramene" id="AT1G21890.1">
    <property type="protein sequence ID" value="AT1G21890.1"/>
    <property type="gene ID" value="AT1G21890"/>
</dbReference>
<dbReference type="KEGG" id="ath:AT1G21890"/>
<dbReference type="Araport" id="AT1G21890"/>
<dbReference type="TAIR" id="AT1G21890">
    <property type="gene designation" value="UMAMIT19"/>
</dbReference>
<dbReference type="eggNOG" id="ENOG502QQ3S">
    <property type="taxonomic scope" value="Eukaryota"/>
</dbReference>
<dbReference type="HOGENOM" id="CLU_025359_1_1_1"/>
<dbReference type="InParanoid" id="F4HZQ7"/>
<dbReference type="OMA" id="LARCCGW"/>
<dbReference type="OrthoDB" id="1728340at2759"/>
<dbReference type="PRO" id="PR:F4HZQ7"/>
<dbReference type="Proteomes" id="UP000006548">
    <property type="component" value="Chromosome 1"/>
</dbReference>
<dbReference type="ExpressionAtlas" id="F4HZQ7">
    <property type="expression patterns" value="baseline and differential"/>
</dbReference>
<dbReference type="GO" id="GO:0016020">
    <property type="term" value="C:membrane"/>
    <property type="evidence" value="ECO:0007669"/>
    <property type="project" value="UniProtKB-SubCell"/>
</dbReference>
<dbReference type="GO" id="GO:0022857">
    <property type="term" value="F:transmembrane transporter activity"/>
    <property type="evidence" value="ECO:0007669"/>
    <property type="project" value="InterPro"/>
</dbReference>
<dbReference type="InterPro" id="IPR000620">
    <property type="entry name" value="EamA_dom"/>
</dbReference>
<dbReference type="InterPro" id="IPR030184">
    <property type="entry name" value="WAT1-related"/>
</dbReference>
<dbReference type="PANTHER" id="PTHR31218">
    <property type="entry name" value="WAT1-RELATED PROTEIN"/>
    <property type="match status" value="1"/>
</dbReference>
<dbReference type="Pfam" id="PF00892">
    <property type="entry name" value="EamA"/>
    <property type="match status" value="2"/>
</dbReference>
<dbReference type="SUPFAM" id="SSF103481">
    <property type="entry name" value="Multidrug resistance efflux transporter EmrE"/>
    <property type="match status" value="2"/>
</dbReference>
<organism>
    <name type="scientific">Arabidopsis thaliana</name>
    <name type="common">Mouse-ear cress</name>
    <dbReference type="NCBI Taxonomy" id="3702"/>
    <lineage>
        <taxon>Eukaryota</taxon>
        <taxon>Viridiplantae</taxon>
        <taxon>Streptophyta</taxon>
        <taxon>Embryophyta</taxon>
        <taxon>Tracheophyta</taxon>
        <taxon>Spermatophyta</taxon>
        <taxon>Magnoliopsida</taxon>
        <taxon>eudicotyledons</taxon>
        <taxon>Gunneridae</taxon>
        <taxon>Pentapetalae</taxon>
        <taxon>rosids</taxon>
        <taxon>malvids</taxon>
        <taxon>Brassicales</taxon>
        <taxon>Brassicaceae</taxon>
        <taxon>Camelineae</taxon>
        <taxon>Arabidopsis</taxon>
    </lineage>
</organism>
<proteinExistence type="evidence at transcript level"/>
<name>WTR5_ARATH</name>
<accession>F4HZQ7</accession>
<accession>Q8VZ54</accession>
<accession>Q9SFE7</accession>